<reference key="1">
    <citation type="submission" date="1995-10" db="EMBL/GenBank/DDBJ databases">
        <authorList>
            <person name="Ma D.-P."/>
        </authorList>
    </citation>
    <scope>NUCLEOTIDE SEQUENCE [MRNA]</scope>
    <source>
        <strain>cv. DES119</strain>
    </source>
</reference>
<protein>
    <recommendedName>
        <fullName>Non-specific lipid-transfer protein</fullName>
        <shortName>LTP</shortName>
    </recommendedName>
</protein>
<comment type="function">
    <text evidence="1">Plant non-specific lipid-transfer proteins transfer phospholipids as well as galactolipids across membranes. May play a role in wax or cutin deposition in the cell walls of expanding epidermal cells and certain secretory tissues (By similarity).</text>
</comment>
<comment type="similarity">
    <text evidence="3">Belongs to the plant LTP family.</text>
</comment>
<keyword id="KW-1015">Disulfide bond</keyword>
<keyword id="KW-0446">Lipid-binding</keyword>
<keyword id="KW-1185">Reference proteome</keyword>
<keyword id="KW-0732">Signal</keyword>
<keyword id="KW-0813">Transport</keyword>
<sequence length="116" mass="11440">MSLKLACVVVLCMVVGAPLAQGAVTSGQVTNSLAPCINYLRGSGAGAVPPGCCTGIKSLNSAAQTTPVRQAACRCIKSAAAGITGINFGLASGLPGKCGVNIPYKISPSTDCNSVK</sequence>
<evidence type="ECO:0000250" key="1"/>
<evidence type="ECO:0000255" key="2"/>
<evidence type="ECO:0000305" key="3"/>
<organism>
    <name type="scientific">Gossypium hirsutum</name>
    <name type="common">Upland cotton</name>
    <name type="synonym">Gossypium mexicanum</name>
    <dbReference type="NCBI Taxonomy" id="3635"/>
    <lineage>
        <taxon>Eukaryota</taxon>
        <taxon>Viridiplantae</taxon>
        <taxon>Streptophyta</taxon>
        <taxon>Embryophyta</taxon>
        <taxon>Tracheophyta</taxon>
        <taxon>Spermatophyta</taxon>
        <taxon>Magnoliopsida</taxon>
        <taxon>eudicotyledons</taxon>
        <taxon>Gunneridae</taxon>
        <taxon>Pentapetalae</taxon>
        <taxon>rosids</taxon>
        <taxon>malvids</taxon>
        <taxon>Malvales</taxon>
        <taxon>Malvaceae</taxon>
        <taxon>Malvoideae</taxon>
        <taxon>Gossypium</taxon>
    </lineage>
</organism>
<feature type="signal peptide" evidence="2">
    <location>
        <begin position="1"/>
        <end position="22"/>
    </location>
</feature>
<feature type="chain" id="PRO_0000018377" description="Non-specific lipid-transfer protein">
    <location>
        <begin position="23"/>
        <end position="116"/>
    </location>
</feature>
<feature type="disulfide bond" evidence="1">
    <location>
        <begin position="36"/>
        <end position="52"/>
    </location>
</feature>
<feature type="disulfide bond" evidence="1">
    <location>
        <begin position="53"/>
        <end position="98"/>
    </location>
</feature>
<feature type="disulfide bond" evidence="1">
    <location>
        <begin position="73"/>
        <end position="112"/>
    </location>
</feature>
<name>NLTP1_GOSHI</name>
<proteinExistence type="inferred from homology"/>
<accession>Q42762</accession>
<dbReference type="EMBL" id="U15153">
    <property type="protein sequence ID" value="AAA75599.1"/>
    <property type="molecule type" value="mRNA"/>
</dbReference>
<dbReference type="SMR" id="Q42762"/>
<dbReference type="STRING" id="3635.Q42762"/>
<dbReference type="PaxDb" id="3635-Q42762"/>
<dbReference type="Proteomes" id="UP000189702">
    <property type="component" value="Unplaced"/>
</dbReference>
<dbReference type="GO" id="GO:0008289">
    <property type="term" value="F:lipid binding"/>
    <property type="evidence" value="ECO:0007669"/>
    <property type="project" value="UniProtKB-KW"/>
</dbReference>
<dbReference type="GO" id="GO:0006869">
    <property type="term" value="P:lipid transport"/>
    <property type="evidence" value="ECO:0007669"/>
    <property type="project" value="InterPro"/>
</dbReference>
<dbReference type="CDD" id="cd01960">
    <property type="entry name" value="nsLTP1"/>
    <property type="match status" value="1"/>
</dbReference>
<dbReference type="FunFam" id="1.10.110.10:FF:000002">
    <property type="entry name" value="Non-specific lipid-transfer protein"/>
    <property type="match status" value="1"/>
</dbReference>
<dbReference type="Gene3D" id="1.10.110.10">
    <property type="entry name" value="Plant lipid-transfer and hydrophobic proteins"/>
    <property type="match status" value="1"/>
</dbReference>
<dbReference type="InterPro" id="IPR036312">
    <property type="entry name" value="Bifun_inhib/LTP/seed_sf"/>
</dbReference>
<dbReference type="InterPro" id="IPR016140">
    <property type="entry name" value="Bifunc_inhib/LTP/seed_store"/>
</dbReference>
<dbReference type="InterPro" id="IPR000528">
    <property type="entry name" value="Plant_nsLTP"/>
</dbReference>
<dbReference type="PANTHER" id="PTHR33076">
    <property type="entry name" value="NON-SPECIFIC LIPID-TRANSFER PROTEIN 2-RELATED"/>
    <property type="match status" value="1"/>
</dbReference>
<dbReference type="Pfam" id="PF00234">
    <property type="entry name" value="Tryp_alpha_amyl"/>
    <property type="match status" value="1"/>
</dbReference>
<dbReference type="PRINTS" id="PR00382">
    <property type="entry name" value="LIPIDTRNSFER"/>
</dbReference>
<dbReference type="SMART" id="SM00499">
    <property type="entry name" value="AAI"/>
    <property type="match status" value="1"/>
</dbReference>
<dbReference type="SUPFAM" id="SSF47699">
    <property type="entry name" value="Bifunctional inhibitor/lipid-transfer protein/seed storage 2S albumin"/>
    <property type="match status" value="1"/>
</dbReference>
<dbReference type="PROSITE" id="PS00597">
    <property type="entry name" value="PLANT_LTP"/>
    <property type="match status" value="1"/>
</dbReference>